<proteinExistence type="evidence at protein level"/>
<comment type="function">
    <text evidence="1 4">Component of a multiprotein complex required for the assembly of the RNA endonuclease module of the integrator complex (By similarity). Associates with INTS9 and INTS11 in the cytoplasm and blocks the active site of INTS11 to inhibit the endonuclease activity of INTS11 before formation of the full integrator complex (By similarity). Following dissociation of WDR73 of the complex, BRAT1 facilitates the nuclear import of the INTS9-INTS11 heterodimer (By similarity). In the nucleus, INTS4 is integrated to the INTS9-INTS11 heterodimer and BRAT1 is released from the mature RNA endonuclease module by inositol hexakisphosphate (InsP6) (By similarity). BRAT1 is also involved in DNA damage response; activates kinases ATM, SMC1A and PRKDC by modulating their phosphorylation status following ionizing radiation (IR) stress (By similarity). Plays a role in regulating mitochondrial function and cell proliferation (By similarity). Required for protein stability of MTOR and MTOR-related proteins, and cell cycle progress by growth factors (PubMed:25657994).</text>
</comment>
<comment type="subunit">
    <text evidence="1">Part of the multiprotein complex composed of BRAT1, WDR73, as well as integrator complex subunits INTS9 and INTS11. Interacts with BRCA1 and ATM. Interacts with MTOR and RPTOR. Interacts with NDFIP1. Interacts with SMC1A and PRKDC.</text>
</comment>
<comment type="subcellular location">
    <subcellularLocation>
        <location evidence="3">Nucleus</location>
    </subcellularLocation>
    <subcellularLocation>
        <location evidence="3">Cytoplasm</location>
    </subcellularLocation>
    <text evidence="1 3">Present at double strand breaks (DSBs) following ionizing radiation treatment (By similarity). The ubiquitinated form localizes in the nucleus in a NDFIP1-dependent manner.</text>
</comment>
<comment type="alternative products">
    <event type="alternative splicing"/>
    <isoform>
        <id>Q8C3R1-1</id>
        <name>1</name>
        <sequence type="displayed"/>
    </isoform>
    <isoform>
        <id>Q8C3R1-2</id>
        <name>2</name>
        <sequence type="described" ref="VSP_039548 VSP_039549"/>
    </isoform>
</comment>
<comment type="tissue specificity">
    <text evidence="2">High levels detected in the cortex and much lower levels detected in the cerebellum, spinal cord and lung (at protein level).</text>
</comment>
<comment type="domain">
    <text evidence="1">The BRAT1-like motif mediates inhibition of the endonuclease activity of INTS11 by forming hyrogen bond and hydrophobic interactions with the active site of INTS11: Cys-821 coordinates one of the two active site zinc ions of INTS11.</text>
</comment>
<comment type="PTM">
    <text evidence="1">Ubiquitinated by NEDD4, NEDD4L and ITCH; mono- and polyubiquitinated forms are detected.</text>
</comment>
<comment type="similarity">
    <text evidence="7">Belongs to the BRAT1 family.</text>
</comment>
<comment type="sequence caution" evidence="7">
    <conflict type="erroneous initiation">
        <sequence resource="EMBL-CDS" id="AAF43013"/>
    </conflict>
    <text>Extended N-terminus.</text>
</comment>
<comment type="sequence caution" evidence="7">
    <conflict type="frameshift">
        <sequence resource="EMBL-CDS" id="BAE41674"/>
    </conflict>
</comment>
<evidence type="ECO:0000250" key="1">
    <source>
        <dbReference type="UniProtKB" id="Q6PJG6"/>
    </source>
</evidence>
<evidence type="ECO:0000269" key="2">
    <source>
    </source>
</evidence>
<evidence type="ECO:0000269" key="3">
    <source>
    </source>
</evidence>
<evidence type="ECO:0000269" key="4">
    <source>
    </source>
</evidence>
<evidence type="ECO:0000303" key="5">
    <source>
    </source>
</evidence>
<evidence type="ECO:0000303" key="6">
    <source>
    </source>
</evidence>
<evidence type="ECO:0000305" key="7"/>
<evidence type="ECO:0000312" key="8">
    <source>
        <dbReference type="MGI" id="MGI:1891679"/>
    </source>
</evidence>
<evidence type="ECO:0007744" key="9">
    <source>
    </source>
</evidence>
<dbReference type="EMBL" id="AK085091">
    <property type="protein sequence ID" value="BAC39362.1"/>
    <property type="molecule type" value="mRNA"/>
</dbReference>
<dbReference type="EMBL" id="AK170269">
    <property type="protein sequence ID" value="BAE41674.1"/>
    <property type="status" value="ALT_FRAME"/>
    <property type="molecule type" value="mRNA"/>
</dbReference>
<dbReference type="EMBL" id="AK154448">
    <property type="protein sequence ID" value="BAE32593.1"/>
    <property type="molecule type" value="mRNA"/>
</dbReference>
<dbReference type="EMBL" id="AK084987">
    <property type="protein sequence ID" value="BAC39330.1"/>
    <property type="molecule type" value="mRNA"/>
</dbReference>
<dbReference type="EMBL" id="CH466529">
    <property type="protein sequence ID" value="EDL19108.1"/>
    <property type="molecule type" value="Genomic_DNA"/>
</dbReference>
<dbReference type="EMBL" id="BC068301">
    <property type="protein sequence ID" value="AAH68301.1"/>
    <property type="molecule type" value="mRNA"/>
</dbReference>
<dbReference type="EMBL" id="AF226663">
    <property type="protein sequence ID" value="AAF43013.1"/>
    <property type="status" value="ALT_INIT"/>
    <property type="molecule type" value="mRNA"/>
</dbReference>
<dbReference type="CCDS" id="CCDS19823.1">
    <molecule id="Q8C3R1-1"/>
</dbReference>
<dbReference type="RefSeq" id="NP_001263216.1">
    <property type="nucleotide sequence ID" value="NM_001276287.1"/>
</dbReference>
<dbReference type="RefSeq" id="NP_001411573.1">
    <molecule id="Q8C3R1-1"/>
    <property type="nucleotide sequence ID" value="NM_001424644.1"/>
</dbReference>
<dbReference type="RefSeq" id="NP_851411.1">
    <molecule id="Q8C3R1-1"/>
    <property type="nucleotide sequence ID" value="NM_181066.4"/>
</dbReference>
<dbReference type="SMR" id="Q8C3R1"/>
<dbReference type="FunCoup" id="Q8C3R1">
    <property type="interactions" value="4091"/>
</dbReference>
<dbReference type="IntAct" id="Q8C3R1">
    <property type="interactions" value="1"/>
</dbReference>
<dbReference type="MINT" id="Q8C3R1"/>
<dbReference type="STRING" id="10090.ENSMUSP00000098074"/>
<dbReference type="iPTMnet" id="Q8C3R1"/>
<dbReference type="PhosphoSitePlus" id="Q8C3R1"/>
<dbReference type="SwissPalm" id="Q8C3R1"/>
<dbReference type="jPOST" id="Q8C3R1"/>
<dbReference type="PaxDb" id="10090-ENSMUSP00000036016"/>
<dbReference type="PeptideAtlas" id="Q8C3R1"/>
<dbReference type="ProteomicsDB" id="273838">
    <molecule id="Q8C3R1-1"/>
</dbReference>
<dbReference type="ProteomicsDB" id="273839">
    <molecule id="Q8C3R1-2"/>
</dbReference>
<dbReference type="Pumba" id="Q8C3R1"/>
<dbReference type="Antibodypedia" id="24393">
    <property type="antibodies" value="80 antibodies from 20 providers"/>
</dbReference>
<dbReference type="Ensembl" id="ENSMUST00000041588.13">
    <molecule id="Q8C3R1-1"/>
    <property type="protein sequence ID" value="ENSMUSP00000036016.7"/>
    <property type="gene ID" value="ENSMUSG00000000148.18"/>
</dbReference>
<dbReference type="Ensembl" id="ENSMUST00000110806.8">
    <molecule id="Q8C3R1-2"/>
    <property type="protein sequence ID" value="ENSMUSP00000106429.2"/>
    <property type="gene ID" value="ENSMUSG00000000148.18"/>
</dbReference>
<dbReference type="GeneID" id="231841"/>
<dbReference type="KEGG" id="mmu:231841"/>
<dbReference type="UCSC" id="uc009aib.2">
    <molecule id="Q8C3R1-2"/>
    <property type="organism name" value="mouse"/>
</dbReference>
<dbReference type="UCSC" id="uc009aic.2">
    <molecule id="Q8C3R1-1"/>
    <property type="organism name" value="mouse"/>
</dbReference>
<dbReference type="AGR" id="MGI:1891679"/>
<dbReference type="CTD" id="221927"/>
<dbReference type="MGI" id="MGI:1891679">
    <property type="gene designation" value="Brat1"/>
</dbReference>
<dbReference type="VEuPathDB" id="HostDB:ENSMUSG00000000148"/>
<dbReference type="eggNOG" id="ENOG502QRW9">
    <property type="taxonomic scope" value="Eukaryota"/>
</dbReference>
<dbReference type="GeneTree" id="ENSGT00390000017551"/>
<dbReference type="HOGENOM" id="CLU_018926_1_0_1"/>
<dbReference type="InParanoid" id="Q8C3R1"/>
<dbReference type="OMA" id="IQVFTEW"/>
<dbReference type="OrthoDB" id="10057956at2759"/>
<dbReference type="PhylomeDB" id="Q8C3R1"/>
<dbReference type="TreeFam" id="TF324349"/>
<dbReference type="BioGRID-ORCS" id="231841">
    <property type="hits" value="16 hits in 79 CRISPR screens"/>
</dbReference>
<dbReference type="ChiTaRS" id="Brat1">
    <property type="organism name" value="mouse"/>
</dbReference>
<dbReference type="PRO" id="PR:Q8C3R1"/>
<dbReference type="Proteomes" id="UP000000589">
    <property type="component" value="Chromosome 5"/>
</dbReference>
<dbReference type="RNAct" id="Q8C3R1">
    <property type="molecule type" value="protein"/>
</dbReference>
<dbReference type="Bgee" id="ENSMUSG00000000148">
    <property type="expression patterns" value="Expressed in humerus cartilage element and 241 other cell types or tissues"/>
</dbReference>
<dbReference type="ExpressionAtlas" id="Q8C3R1">
    <property type="expression patterns" value="baseline and differential"/>
</dbReference>
<dbReference type="GO" id="GO:0005737">
    <property type="term" value="C:cytoplasm"/>
    <property type="evidence" value="ECO:0000314"/>
    <property type="project" value="UniProtKB"/>
</dbReference>
<dbReference type="GO" id="GO:0005829">
    <property type="term" value="C:cytosol"/>
    <property type="evidence" value="ECO:0007669"/>
    <property type="project" value="Ensembl"/>
</dbReference>
<dbReference type="GO" id="GO:0005654">
    <property type="term" value="C:nucleoplasm"/>
    <property type="evidence" value="ECO:0007669"/>
    <property type="project" value="Ensembl"/>
</dbReference>
<dbReference type="GO" id="GO:0005634">
    <property type="term" value="C:nucleus"/>
    <property type="evidence" value="ECO:0000314"/>
    <property type="project" value="UniProtKB"/>
</dbReference>
<dbReference type="GO" id="GO:0008428">
    <property type="term" value="F:ribonuclease inhibitor activity"/>
    <property type="evidence" value="ECO:0000250"/>
    <property type="project" value="UniProtKB"/>
</dbReference>
<dbReference type="GO" id="GO:0006915">
    <property type="term" value="P:apoptotic process"/>
    <property type="evidence" value="ECO:0000250"/>
    <property type="project" value="UniProtKB"/>
</dbReference>
<dbReference type="GO" id="GO:0016477">
    <property type="term" value="P:cell migration"/>
    <property type="evidence" value="ECO:0000250"/>
    <property type="project" value="UniProtKB"/>
</dbReference>
<dbReference type="GO" id="GO:0008283">
    <property type="term" value="P:cell population proliferation"/>
    <property type="evidence" value="ECO:0000250"/>
    <property type="project" value="UniProtKB"/>
</dbReference>
<dbReference type="GO" id="GO:0006974">
    <property type="term" value="P:DNA damage response"/>
    <property type="evidence" value="ECO:0000250"/>
    <property type="project" value="UniProtKB"/>
</dbReference>
<dbReference type="GO" id="GO:0006006">
    <property type="term" value="P:glucose metabolic process"/>
    <property type="evidence" value="ECO:0000250"/>
    <property type="project" value="UniProtKB"/>
</dbReference>
<dbReference type="GO" id="GO:0160234">
    <property type="term" value="P:integrator complex assembly"/>
    <property type="evidence" value="ECO:0000250"/>
    <property type="project" value="UniProtKB"/>
</dbReference>
<dbReference type="GO" id="GO:0051646">
    <property type="term" value="P:mitochondrion localization"/>
    <property type="evidence" value="ECO:0000250"/>
    <property type="project" value="UniProtKB"/>
</dbReference>
<dbReference type="GO" id="GO:0030307">
    <property type="term" value="P:positive regulation of cell growth"/>
    <property type="evidence" value="ECO:0007669"/>
    <property type="project" value="Ensembl"/>
</dbReference>
<dbReference type="GO" id="GO:0001934">
    <property type="term" value="P:positive regulation of protein phosphorylation"/>
    <property type="evidence" value="ECO:0000250"/>
    <property type="project" value="UniProtKB"/>
</dbReference>
<dbReference type="GO" id="GO:0034504">
    <property type="term" value="P:protein localization to nucleus"/>
    <property type="evidence" value="ECO:0000250"/>
    <property type="project" value="UniProtKB"/>
</dbReference>
<dbReference type="GO" id="GO:0010212">
    <property type="term" value="P:response to ionizing radiation"/>
    <property type="evidence" value="ECO:0000250"/>
    <property type="project" value="UniProtKB"/>
</dbReference>
<dbReference type="FunFam" id="1.25.10.10:FF:001003">
    <property type="entry name" value="BRCA1-associated ATM activator 1"/>
    <property type="match status" value="1"/>
</dbReference>
<dbReference type="Gene3D" id="1.25.10.10">
    <property type="entry name" value="Leucine-rich Repeat Variant"/>
    <property type="match status" value="1"/>
</dbReference>
<dbReference type="InterPro" id="IPR011989">
    <property type="entry name" value="ARM-like"/>
</dbReference>
<dbReference type="InterPro" id="IPR016024">
    <property type="entry name" value="ARM-type_fold"/>
</dbReference>
<dbReference type="InterPro" id="IPR038904">
    <property type="entry name" value="BRAT1"/>
</dbReference>
<dbReference type="InterPro" id="IPR000357">
    <property type="entry name" value="HEAT"/>
</dbReference>
<dbReference type="PANTHER" id="PTHR21331">
    <property type="entry name" value="BRCA1-ASSOCIATED ATM ACTIVATOR 1"/>
    <property type="match status" value="1"/>
</dbReference>
<dbReference type="PANTHER" id="PTHR21331:SF2">
    <property type="entry name" value="BRCA1-ASSOCIATED ATM ACTIVATOR 1"/>
    <property type="match status" value="1"/>
</dbReference>
<dbReference type="Pfam" id="PF02985">
    <property type="entry name" value="HEAT"/>
    <property type="match status" value="1"/>
</dbReference>
<dbReference type="SUPFAM" id="SSF48371">
    <property type="entry name" value="ARM repeat"/>
    <property type="match status" value="1"/>
</dbReference>
<feature type="chain" id="PRO_0000395837" description="Integrator complex assembly factor BRAT1">
    <location>
        <begin position="1"/>
        <end position="822"/>
    </location>
</feature>
<feature type="repeat" description="HEAT 1">
    <location>
        <begin position="495"/>
        <end position="531"/>
    </location>
</feature>
<feature type="repeat" description="HEAT 2">
    <location>
        <begin position="544"/>
        <end position="576"/>
    </location>
</feature>
<feature type="region of interest" description="Required for interaction with NDFIP1" evidence="1">
    <location>
        <begin position="100"/>
        <end position="200"/>
    </location>
</feature>
<feature type="short sequence motif" description="BRAT1-like motif" evidence="1">
    <location>
        <begin position="820"/>
        <end position="822"/>
    </location>
</feature>
<feature type="binding site" evidence="1">
    <location>
        <position position="821"/>
    </location>
    <ligand>
        <name>Zn(2+)</name>
        <dbReference type="ChEBI" id="CHEBI:29105"/>
    </ligand>
</feature>
<feature type="modified residue" description="Phosphoserine" evidence="9">
    <location>
        <position position="743"/>
    </location>
</feature>
<feature type="splice variant" id="VSP_039548" description="In isoform 2." evidence="7">
    <original>GLLMDL</original>
    <variation>VDTGSW</variation>
    <location>
        <begin position="592"/>
        <end position="597"/>
    </location>
</feature>
<feature type="splice variant" id="VSP_039549" description="In isoform 2." evidence="7">
    <location>
        <begin position="598"/>
        <end position="822"/>
    </location>
</feature>
<feature type="sequence conflict" description="In Ref. 2; AAH68301." evidence="7" ref="2">
    <original>L</original>
    <variation>F</variation>
    <location>
        <position position="9"/>
    </location>
</feature>
<feature type="sequence conflict" description="In Ref. 1; BAE32593." evidence="7" ref="1">
    <original>L</original>
    <variation>Q</variation>
    <location>
        <position position="375"/>
    </location>
</feature>
<keyword id="KW-0025">Alternative splicing</keyword>
<keyword id="KW-0963">Cytoplasm</keyword>
<keyword id="KW-0227">DNA damage</keyword>
<keyword id="KW-0479">Metal-binding</keyword>
<keyword id="KW-0539">Nucleus</keyword>
<keyword id="KW-0597">Phosphoprotein</keyword>
<keyword id="KW-1185">Reference proteome</keyword>
<keyword id="KW-0677">Repeat</keyword>
<keyword id="KW-0832">Ubl conjugation</keyword>
<keyword id="KW-0862">Zinc</keyword>
<sequence>MDPECSRLLPALCAVLADPRQLVADDTCLEKLLDWFKTVTEAESSLQLLQDHPCLMELLSHVLKPQDVSPRVLSFALRLVGVFAAQEDCFEYLQQGELLLGLFGESGAPGWAAWSIPSVRSGWIQGLCYLAHHPSALHFLADSGAVDTLFSLQGDPSLFVASAASQLLVHILALSMQGGAPGSPVPEAAAWPMCAQKIVNHVDESLHAKATPQVTQALNVLTTTFGRCHNPWTGVLWERLSPPVARLFERDPIPAVHALMDLLLSVARSPVLNFAACGLWEMLAQTLSRLSPIQAGPLALGTLKLQHCPQELRTQAFGVLLQPLACILKATTQAPGPPGLLDGTVGSLLTVDILLASKSACVGLLCQTLAHLEELQMLPQCPSPWPQVHLLQAALTILHLCDGSADPSSSAGGRLCGTLGGCVRVQRAALDFLGTLSQGTSPLELVLEVFAVLLKTLESPESSPMVLKKAFQATLRWLQNPHKTPSSSDLSSDALLFLGELFPILQKRLCSPCWEVRDSALEFLTHLIRHWGGQADFREALRSSEVPTLALQLLQDPESYVRASAVGAAGQLSSQGLQAAPASPENSQAQQGLLMDLMHILSTDSEGFPRRAVLRVFTDWLRDGHADVVRDTEWFVATVLQAVSRDLDWEVRVQGLELARVFLTQALGQPSLHCPYTVGLPRASSPRPHPEFLQTLCRLPLFEFAFCALLDCDRPVAQKACDLLLFLRDKTVPCSSPREAGDSPNSASVEAALQRWREGEQAQPLGDLDPEAMLAILRALDLEGLQGRLAKSSDHVEKSPQSLLQDMLATVGVLEENEADCY</sequence>
<gene>
    <name evidence="6 8" type="primary">Brat1</name>
    <name evidence="5" type="synonym">Baat1</name>
</gene>
<protein>
    <recommendedName>
        <fullName evidence="7">Integrator complex assembly factor BRAT1</fullName>
    </recommendedName>
    <alternativeName>
        <fullName evidence="6">BRCA1-associated ATM activator 1</fullName>
    </alternativeName>
    <alternativeName>
        <fullName evidence="5">BRCA1-associated protein required for ATM activation protein 1</fullName>
    </alternativeName>
</protein>
<organism>
    <name type="scientific">Mus musculus</name>
    <name type="common">Mouse</name>
    <dbReference type="NCBI Taxonomy" id="10090"/>
    <lineage>
        <taxon>Eukaryota</taxon>
        <taxon>Metazoa</taxon>
        <taxon>Chordata</taxon>
        <taxon>Craniata</taxon>
        <taxon>Vertebrata</taxon>
        <taxon>Euteleostomi</taxon>
        <taxon>Mammalia</taxon>
        <taxon>Eutheria</taxon>
        <taxon>Euarchontoglires</taxon>
        <taxon>Glires</taxon>
        <taxon>Rodentia</taxon>
        <taxon>Myomorpha</taxon>
        <taxon>Muroidea</taxon>
        <taxon>Muridae</taxon>
        <taxon>Murinae</taxon>
        <taxon>Mus</taxon>
        <taxon>Mus</taxon>
    </lineage>
</organism>
<reference key="1">
    <citation type="journal article" date="2005" name="Science">
        <title>The transcriptional landscape of the mammalian genome.</title>
        <authorList>
            <person name="Carninci P."/>
            <person name="Kasukawa T."/>
            <person name="Katayama S."/>
            <person name="Gough J."/>
            <person name="Frith M.C."/>
            <person name="Maeda N."/>
            <person name="Oyama R."/>
            <person name="Ravasi T."/>
            <person name="Lenhard B."/>
            <person name="Wells C."/>
            <person name="Kodzius R."/>
            <person name="Shimokawa K."/>
            <person name="Bajic V.B."/>
            <person name="Brenner S.E."/>
            <person name="Batalov S."/>
            <person name="Forrest A.R."/>
            <person name="Zavolan M."/>
            <person name="Davis M.J."/>
            <person name="Wilming L.G."/>
            <person name="Aidinis V."/>
            <person name="Allen J.E."/>
            <person name="Ambesi-Impiombato A."/>
            <person name="Apweiler R."/>
            <person name="Aturaliya R.N."/>
            <person name="Bailey T.L."/>
            <person name="Bansal M."/>
            <person name="Baxter L."/>
            <person name="Beisel K.W."/>
            <person name="Bersano T."/>
            <person name="Bono H."/>
            <person name="Chalk A.M."/>
            <person name="Chiu K.P."/>
            <person name="Choudhary V."/>
            <person name="Christoffels A."/>
            <person name="Clutterbuck D.R."/>
            <person name="Crowe M.L."/>
            <person name="Dalla E."/>
            <person name="Dalrymple B.P."/>
            <person name="de Bono B."/>
            <person name="Della Gatta G."/>
            <person name="di Bernardo D."/>
            <person name="Down T."/>
            <person name="Engstrom P."/>
            <person name="Fagiolini M."/>
            <person name="Faulkner G."/>
            <person name="Fletcher C.F."/>
            <person name="Fukushima T."/>
            <person name="Furuno M."/>
            <person name="Futaki S."/>
            <person name="Gariboldi M."/>
            <person name="Georgii-Hemming P."/>
            <person name="Gingeras T.R."/>
            <person name="Gojobori T."/>
            <person name="Green R.E."/>
            <person name="Gustincich S."/>
            <person name="Harbers M."/>
            <person name="Hayashi Y."/>
            <person name="Hensch T.K."/>
            <person name="Hirokawa N."/>
            <person name="Hill D."/>
            <person name="Huminiecki L."/>
            <person name="Iacono M."/>
            <person name="Ikeo K."/>
            <person name="Iwama A."/>
            <person name="Ishikawa T."/>
            <person name="Jakt M."/>
            <person name="Kanapin A."/>
            <person name="Katoh M."/>
            <person name="Kawasawa Y."/>
            <person name="Kelso J."/>
            <person name="Kitamura H."/>
            <person name="Kitano H."/>
            <person name="Kollias G."/>
            <person name="Krishnan S.P."/>
            <person name="Kruger A."/>
            <person name="Kummerfeld S.K."/>
            <person name="Kurochkin I.V."/>
            <person name="Lareau L.F."/>
            <person name="Lazarevic D."/>
            <person name="Lipovich L."/>
            <person name="Liu J."/>
            <person name="Liuni S."/>
            <person name="McWilliam S."/>
            <person name="Madan Babu M."/>
            <person name="Madera M."/>
            <person name="Marchionni L."/>
            <person name="Matsuda H."/>
            <person name="Matsuzawa S."/>
            <person name="Miki H."/>
            <person name="Mignone F."/>
            <person name="Miyake S."/>
            <person name="Morris K."/>
            <person name="Mottagui-Tabar S."/>
            <person name="Mulder N."/>
            <person name="Nakano N."/>
            <person name="Nakauchi H."/>
            <person name="Ng P."/>
            <person name="Nilsson R."/>
            <person name="Nishiguchi S."/>
            <person name="Nishikawa S."/>
            <person name="Nori F."/>
            <person name="Ohara O."/>
            <person name="Okazaki Y."/>
            <person name="Orlando V."/>
            <person name="Pang K.C."/>
            <person name="Pavan W.J."/>
            <person name="Pavesi G."/>
            <person name="Pesole G."/>
            <person name="Petrovsky N."/>
            <person name="Piazza S."/>
            <person name="Reed J."/>
            <person name="Reid J.F."/>
            <person name="Ring B.Z."/>
            <person name="Ringwald M."/>
            <person name="Rost B."/>
            <person name="Ruan Y."/>
            <person name="Salzberg S.L."/>
            <person name="Sandelin A."/>
            <person name="Schneider C."/>
            <person name="Schoenbach C."/>
            <person name="Sekiguchi K."/>
            <person name="Semple C.A."/>
            <person name="Seno S."/>
            <person name="Sessa L."/>
            <person name="Sheng Y."/>
            <person name="Shibata Y."/>
            <person name="Shimada H."/>
            <person name="Shimada K."/>
            <person name="Silva D."/>
            <person name="Sinclair B."/>
            <person name="Sperling S."/>
            <person name="Stupka E."/>
            <person name="Sugiura K."/>
            <person name="Sultana R."/>
            <person name="Takenaka Y."/>
            <person name="Taki K."/>
            <person name="Tammoja K."/>
            <person name="Tan S.L."/>
            <person name="Tang S."/>
            <person name="Taylor M.S."/>
            <person name="Tegner J."/>
            <person name="Teichmann S.A."/>
            <person name="Ueda H.R."/>
            <person name="van Nimwegen E."/>
            <person name="Verardo R."/>
            <person name="Wei C.L."/>
            <person name="Yagi K."/>
            <person name="Yamanishi H."/>
            <person name="Zabarovsky E."/>
            <person name="Zhu S."/>
            <person name="Zimmer A."/>
            <person name="Hide W."/>
            <person name="Bult C."/>
            <person name="Grimmond S.M."/>
            <person name="Teasdale R.D."/>
            <person name="Liu E.T."/>
            <person name="Brusic V."/>
            <person name="Quackenbush J."/>
            <person name="Wahlestedt C."/>
            <person name="Mattick J.S."/>
            <person name="Hume D.A."/>
            <person name="Kai C."/>
            <person name="Sasaki D."/>
            <person name="Tomaru Y."/>
            <person name="Fukuda S."/>
            <person name="Kanamori-Katayama M."/>
            <person name="Suzuki M."/>
            <person name="Aoki J."/>
            <person name="Arakawa T."/>
            <person name="Iida J."/>
            <person name="Imamura K."/>
            <person name="Itoh M."/>
            <person name="Kato T."/>
            <person name="Kawaji H."/>
            <person name="Kawagashira N."/>
            <person name="Kawashima T."/>
            <person name="Kojima M."/>
            <person name="Kondo S."/>
            <person name="Konno H."/>
            <person name="Nakano K."/>
            <person name="Ninomiya N."/>
            <person name="Nishio T."/>
            <person name="Okada M."/>
            <person name="Plessy C."/>
            <person name="Shibata K."/>
            <person name="Shiraki T."/>
            <person name="Suzuki S."/>
            <person name="Tagami M."/>
            <person name="Waki K."/>
            <person name="Watahiki A."/>
            <person name="Okamura-Oho Y."/>
            <person name="Suzuki H."/>
            <person name="Kawai J."/>
            <person name="Hayashizaki Y."/>
        </authorList>
    </citation>
    <scope>NUCLEOTIDE SEQUENCE [LARGE SCALE MRNA]</scope>
    <source>
        <strain>C57BL/6J</strain>
        <strain>NOD</strain>
        <tissue>Lung</tissue>
    </source>
</reference>
<reference key="2">
    <citation type="submission" date="2005-09" db="EMBL/GenBank/DDBJ databases">
        <authorList>
            <person name="Mural R.J."/>
            <person name="Adams M.D."/>
            <person name="Myers E.W."/>
            <person name="Smith H.O."/>
            <person name="Venter J.C."/>
        </authorList>
    </citation>
    <scope>NUCLEOTIDE SEQUENCE [LARGE SCALE GENOMIC DNA]</scope>
</reference>
<reference key="3">
    <citation type="journal article" date="2004" name="Genome Res.">
        <title>The status, quality, and expansion of the NIH full-length cDNA project: the Mammalian Gene Collection (MGC).</title>
        <authorList>
            <consortium name="The MGC Project Team"/>
        </authorList>
    </citation>
    <scope>NUCLEOTIDE SEQUENCE [LARGE SCALE MRNA]</scope>
    <source>
        <strain>C3H/He</strain>
        <tissue>Mesenchymal stem cell</tissue>
    </source>
</reference>
<reference key="4">
    <citation type="journal article" date="2000" name="Nature">
        <title>The mouse Dreher gene Lmx1a controls formation of the roof plate in the vertebrate CNS.</title>
        <authorList>
            <person name="Millonig J.H."/>
            <person name="Millen K.J."/>
            <person name="Hatten M.E."/>
        </authorList>
    </citation>
    <scope>NUCLEOTIDE SEQUENCE [MRNA] OF 483-822</scope>
    <source>
        <strain>C57BL/6J</strain>
    </source>
</reference>
<reference key="5">
    <citation type="journal article" date="2010" name="Cell">
        <title>A tissue-specific atlas of mouse protein phosphorylation and expression.</title>
        <authorList>
            <person name="Huttlin E.L."/>
            <person name="Jedrychowski M.P."/>
            <person name="Elias J.E."/>
            <person name="Goswami T."/>
            <person name="Rad R."/>
            <person name="Beausoleil S.A."/>
            <person name="Villen J."/>
            <person name="Haas W."/>
            <person name="Sowa M.E."/>
            <person name="Gygi S.P."/>
        </authorList>
    </citation>
    <scope>PHOSPHORYLATION [LARGE SCALE ANALYSIS] AT SER-743</scope>
    <scope>IDENTIFICATION BY MASS SPECTROMETRY [LARGE SCALE ANALYSIS]</scope>
    <source>
        <tissue>Spleen</tissue>
        <tissue>Testis</tissue>
    </source>
</reference>
<reference key="6">
    <citation type="journal article" date="2011" name="Exp. Ther. Med.">
        <title>Functional interaction of BRCA1/ATM-associated BAAT1 with the DNA-PK catalytic subunit.</title>
        <authorList>
            <person name="So E.Y."/>
            <person name="Ouchi T."/>
        </authorList>
    </citation>
    <scope>TISSUE SPECIFICITY</scope>
</reference>
<reference key="7">
    <citation type="journal article" date="2013" name="J. Cancer Biol. Res.">
        <title>The potential role of BRCA1-associated ATM activator-1 (BRAT1) in regulation of mTOR.</title>
        <authorList>
            <person name="So E.Y."/>
            <person name="Ouchi T."/>
        </authorList>
    </citation>
    <scope>FUNCTION</scope>
</reference>
<reference key="8">
    <citation type="journal article" date="2015" name="J. Biol. Chem.">
        <title>Nedd4 family interacting protein 1 (Ndfip1) is required for ubiquitination and nuclear trafficking of BRCA1-associated ATM activator 1 (BRAT1) during the DNA damage response.</title>
        <authorList>
            <person name="Low L.H."/>
            <person name="Chow Y.L."/>
            <person name="Li Y."/>
            <person name="Goh C.P."/>
            <person name="Putz U."/>
            <person name="Silke J."/>
            <person name="Ouchi T."/>
            <person name="Howitt J."/>
            <person name="Tan S.S."/>
        </authorList>
    </citation>
    <scope>SUBCELLULAR LOCATION</scope>
</reference>
<accession>Q8C3R1</accession>
<accession>Q3TDC8</accession>
<accession>Q3U442</accession>
<accession>Q6NV65</accession>
<accession>Q8C3T3</accession>
<accession>Q9JKU7</accession>
<name>BRAT1_MOUSE</name>